<comment type="function">
    <text evidence="1">Catalyzes the reduction of the glycolytic intermediate dihydroxyacetone phosphate (DHAP) to sn-glycerol 3-phosphate (G3P), the key precursor for phospholipid synthesis.</text>
</comment>
<comment type="catalytic activity">
    <reaction evidence="1">
        <text>sn-glycerol 3-phosphate + NAD(+) = dihydroxyacetone phosphate + NADH + H(+)</text>
        <dbReference type="Rhea" id="RHEA:11092"/>
        <dbReference type="ChEBI" id="CHEBI:15378"/>
        <dbReference type="ChEBI" id="CHEBI:57540"/>
        <dbReference type="ChEBI" id="CHEBI:57597"/>
        <dbReference type="ChEBI" id="CHEBI:57642"/>
        <dbReference type="ChEBI" id="CHEBI:57945"/>
        <dbReference type="EC" id="1.1.1.94"/>
    </reaction>
    <physiologicalReaction direction="right-to-left" evidence="1">
        <dbReference type="Rhea" id="RHEA:11094"/>
    </physiologicalReaction>
</comment>
<comment type="catalytic activity">
    <reaction evidence="1">
        <text>sn-glycerol 3-phosphate + NADP(+) = dihydroxyacetone phosphate + NADPH + H(+)</text>
        <dbReference type="Rhea" id="RHEA:11096"/>
        <dbReference type="ChEBI" id="CHEBI:15378"/>
        <dbReference type="ChEBI" id="CHEBI:57597"/>
        <dbReference type="ChEBI" id="CHEBI:57642"/>
        <dbReference type="ChEBI" id="CHEBI:57783"/>
        <dbReference type="ChEBI" id="CHEBI:58349"/>
        <dbReference type="EC" id="1.1.1.94"/>
    </reaction>
    <physiologicalReaction direction="right-to-left" evidence="1">
        <dbReference type="Rhea" id="RHEA:11098"/>
    </physiologicalReaction>
</comment>
<comment type="pathway">
    <text evidence="1">Membrane lipid metabolism; glycerophospholipid metabolism.</text>
</comment>
<comment type="subcellular location">
    <subcellularLocation>
        <location evidence="1">Cytoplasm</location>
    </subcellularLocation>
</comment>
<comment type="similarity">
    <text evidence="1">Belongs to the NAD-dependent glycerol-3-phosphate dehydrogenase family.</text>
</comment>
<keyword id="KW-0963">Cytoplasm</keyword>
<keyword id="KW-0444">Lipid biosynthesis</keyword>
<keyword id="KW-0443">Lipid metabolism</keyword>
<keyword id="KW-0520">NAD</keyword>
<keyword id="KW-0521">NADP</keyword>
<keyword id="KW-0547">Nucleotide-binding</keyword>
<keyword id="KW-0560">Oxidoreductase</keyword>
<keyword id="KW-0594">Phospholipid biosynthesis</keyword>
<keyword id="KW-1208">Phospholipid metabolism</keyword>
<organism>
    <name type="scientific">Escherichia coli O9:H4 (strain HS)</name>
    <dbReference type="NCBI Taxonomy" id="331112"/>
    <lineage>
        <taxon>Bacteria</taxon>
        <taxon>Pseudomonadati</taxon>
        <taxon>Pseudomonadota</taxon>
        <taxon>Gammaproteobacteria</taxon>
        <taxon>Enterobacterales</taxon>
        <taxon>Enterobacteriaceae</taxon>
        <taxon>Escherichia</taxon>
    </lineage>
</organism>
<proteinExistence type="inferred from homology"/>
<protein>
    <recommendedName>
        <fullName evidence="1">Glycerol-3-phosphate dehydrogenase [NAD(P)+]</fullName>
        <ecNumber evidence="1">1.1.1.94</ecNumber>
    </recommendedName>
    <alternativeName>
        <fullName evidence="1">NAD(P)(+)-dependent glycerol-3-phosphate dehydrogenase</fullName>
    </alternativeName>
    <alternativeName>
        <fullName evidence="1">NAD(P)H-dependent dihydroxyacetone-phosphate reductase</fullName>
    </alternativeName>
</protein>
<sequence length="339" mass="36362">MNQRNASMTVIGAGSYGTALAITLARNGHEVVLWGHDPEHIATLERDRCNAAFLPDVPFPDTLHLESDLATALAASRNILVVVPSHVFGEVLRQIKPLMRPDARLVWATKGLEAETGRLLQDVAREALGDQIPLAVISGPTFAKELAAGLPTAISLASTDQTFADDLQQLLHCGKSFRVYSNPDFIGVQLGGAVKNVIAIGAGMSDGIGFGANARTALITRGLAEMSRLGAALGADPATFMGMAGLGDLVLTCTDNQSRNRRFGMMLGQGMDVQSAQEKIGQVVEGYRNTKEVRELAHRFGVEMPITEEIYQVLYCGKNAREAALTLLGRARKDERSSH</sequence>
<name>GPDA_ECOHS</name>
<reference key="1">
    <citation type="journal article" date="2008" name="J. Bacteriol.">
        <title>The pangenome structure of Escherichia coli: comparative genomic analysis of E. coli commensal and pathogenic isolates.</title>
        <authorList>
            <person name="Rasko D.A."/>
            <person name="Rosovitz M.J."/>
            <person name="Myers G.S.A."/>
            <person name="Mongodin E.F."/>
            <person name="Fricke W.F."/>
            <person name="Gajer P."/>
            <person name="Crabtree J."/>
            <person name="Sebaihia M."/>
            <person name="Thomson N.R."/>
            <person name="Chaudhuri R."/>
            <person name="Henderson I.R."/>
            <person name="Sperandio V."/>
            <person name="Ravel J."/>
        </authorList>
    </citation>
    <scope>NUCLEOTIDE SEQUENCE [LARGE SCALE GENOMIC DNA]</scope>
    <source>
        <strain>HS</strain>
    </source>
</reference>
<dbReference type="EC" id="1.1.1.94" evidence="1"/>
<dbReference type="EMBL" id="CP000802">
    <property type="protein sequence ID" value="ABV08027.1"/>
    <property type="molecule type" value="Genomic_DNA"/>
</dbReference>
<dbReference type="RefSeq" id="WP_001076194.1">
    <property type="nucleotide sequence ID" value="NC_009800.1"/>
</dbReference>
<dbReference type="SMR" id="A8A673"/>
<dbReference type="GeneID" id="93778322"/>
<dbReference type="KEGG" id="ecx:EcHS_A3820"/>
<dbReference type="HOGENOM" id="CLU_033449_0_2_6"/>
<dbReference type="UniPathway" id="UPA00940"/>
<dbReference type="GO" id="GO:0005829">
    <property type="term" value="C:cytosol"/>
    <property type="evidence" value="ECO:0007669"/>
    <property type="project" value="TreeGrafter"/>
</dbReference>
<dbReference type="GO" id="GO:0047952">
    <property type="term" value="F:glycerol-3-phosphate dehydrogenase [NAD(P)+] activity"/>
    <property type="evidence" value="ECO:0007669"/>
    <property type="project" value="UniProtKB-UniRule"/>
</dbReference>
<dbReference type="GO" id="GO:0051287">
    <property type="term" value="F:NAD binding"/>
    <property type="evidence" value="ECO:0007669"/>
    <property type="project" value="InterPro"/>
</dbReference>
<dbReference type="GO" id="GO:0005975">
    <property type="term" value="P:carbohydrate metabolic process"/>
    <property type="evidence" value="ECO:0007669"/>
    <property type="project" value="InterPro"/>
</dbReference>
<dbReference type="GO" id="GO:0046167">
    <property type="term" value="P:glycerol-3-phosphate biosynthetic process"/>
    <property type="evidence" value="ECO:0007669"/>
    <property type="project" value="UniProtKB-UniRule"/>
</dbReference>
<dbReference type="GO" id="GO:0046168">
    <property type="term" value="P:glycerol-3-phosphate catabolic process"/>
    <property type="evidence" value="ECO:0007669"/>
    <property type="project" value="InterPro"/>
</dbReference>
<dbReference type="GO" id="GO:0046474">
    <property type="term" value="P:glycerophospholipid biosynthetic process"/>
    <property type="evidence" value="ECO:0007669"/>
    <property type="project" value="TreeGrafter"/>
</dbReference>
<dbReference type="FunFam" id="1.10.1040.10:FF:000001">
    <property type="entry name" value="Glycerol-3-phosphate dehydrogenase [NAD(P)+]"/>
    <property type="match status" value="1"/>
</dbReference>
<dbReference type="FunFam" id="3.40.50.720:FF:000019">
    <property type="entry name" value="Glycerol-3-phosphate dehydrogenase [NAD(P)+]"/>
    <property type="match status" value="1"/>
</dbReference>
<dbReference type="Gene3D" id="1.10.1040.10">
    <property type="entry name" value="N-(1-d-carboxylethyl)-l-norvaline Dehydrogenase, domain 2"/>
    <property type="match status" value="1"/>
</dbReference>
<dbReference type="Gene3D" id="3.40.50.720">
    <property type="entry name" value="NAD(P)-binding Rossmann-like Domain"/>
    <property type="match status" value="1"/>
</dbReference>
<dbReference type="HAMAP" id="MF_00394">
    <property type="entry name" value="NAD_Glyc3P_dehydrog"/>
    <property type="match status" value="1"/>
</dbReference>
<dbReference type="InterPro" id="IPR008927">
    <property type="entry name" value="6-PGluconate_DH-like_C_sf"/>
</dbReference>
<dbReference type="InterPro" id="IPR013328">
    <property type="entry name" value="6PGD_dom2"/>
</dbReference>
<dbReference type="InterPro" id="IPR006168">
    <property type="entry name" value="G3P_DH_NAD-dep"/>
</dbReference>
<dbReference type="InterPro" id="IPR006109">
    <property type="entry name" value="G3P_DH_NAD-dep_C"/>
</dbReference>
<dbReference type="InterPro" id="IPR011128">
    <property type="entry name" value="G3P_DH_NAD-dep_N"/>
</dbReference>
<dbReference type="InterPro" id="IPR036291">
    <property type="entry name" value="NAD(P)-bd_dom_sf"/>
</dbReference>
<dbReference type="NCBIfam" id="NF000939">
    <property type="entry name" value="PRK00094.1-1"/>
    <property type="match status" value="1"/>
</dbReference>
<dbReference type="NCBIfam" id="NF000940">
    <property type="entry name" value="PRK00094.1-2"/>
    <property type="match status" value="1"/>
</dbReference>
<dbReference type="NCBIfam" id="NF000942">
    <property type="entry name" value="PRK00094.1-4"/>
    <property type="match status" value="1"/>
</dbReference>
<dbReference type="PANTHER" id="PTHR11728">
    <property type="entry name" value="GLYCEROL-3-PHOSPHATE DEHYDROGENASE"/>
    <property type="match status" value="1"/>
</dbReference>
<dbReference type="PANTHER" id="PTHR11728:SF1">
    <property type="entry name" value="GLYCEROL-3-PHOSPHATE DEHYDROGENASE [NAD(+)] 2, CHLOROPLASTIC"/>
    <property type="match status" value="1"/>
</dbReference>
<dbReference type="Pfam" id="PF07479">
    <property type="entry name" value="NAD_Gly3P_dh_C"/>
    <property type="match status" value="1"/>
</dbReference>
<dbReference type="Pfam" id="PF01210">
    <property type="entry name" value="NAD_Gly3P_dh_N"/>
    <property type="match status" value="1"/>
</dbReference>
<dbReference type="PIRSF" id="PIRSF000114">
    <property type="entry name" value="Glycerol-3-P_dh"/>
    <property type="match status" value="1"/>
</dbReference>
<dbReference type="PRINTS" id="PR00077">
    <property type="entry name" value="GPDHDRGNASE"/>
</dbReference>
<dbReference type="SUPFAM" id="SSF48179">
    <property type="entry name" value="6-phosphogluconate dehydrogenase C-terminal domain-like"/>
    <property type="match status" value="1"/>
</dbReference>
<dbReference type="SUPFAM" id="SSF51735">
    <property type="entry name" value="NAD(P)-binding Rossmann-fold domains"/>
    <property type="match status" value="1"/>
</dbReference>
<dbReference type="PROSITE" id="PS00957">
    <property type="entry name" value="NAD_G3PDH"/>
    <property type="match status" value="1"/>
</dbReference>
<evidence type="ECO:0000255" key="1">
    <source>
        <dbReference type="HAMAP-Rule" id="MF_00394"/>
    </source>
</evidence>
<feature type="chain" id="PRO_1000060783" description="Glycerol-3-phosphate dehydrogenase [NAD(P)+]">
    <location>
        <begin position="1"/>
        <end position="339"/>
    </location>
</feature>
<feature type="active site" description="Proton acceptor" evidence="1">
    <location>
        <position position="195"/>
    </location>
</feature>
<feature type="binding site" evidence="1">
    <location>
        <position position="15"/>
    </location>
    <ligand>
        <name>NADPH</name>
        <dbReference type="ChEBI" id="CHEBI:57783"/>
    </ligand>
</feature>
<feature type="binding site" evidence="1">
    <location>
        <position position="16"/>
    </location>
    <ligand>
        <name>NADPH</name>
        <dbReference type="ChEBI" id="CHEBI:57783"/>
    </ligand>
</feature>
<feature type="binding site" evidence="1">
    <location>
        <position position="36"/>
    </location>
    <ligand>
        <name>NADPH</name>
        <dbReference type="ChEBI" id="CHEBI:57783"/>
    </ligand>
</feature>
<feature type="binding site" evidence="1">
    <location>
        <position position="110"/>
    </location>
    <ligand>
        <name>NADPH</name>
        <dbReference type="ChEBI" id="CHEBI:57783"/>
    </ligand>
</feature>
<feature type="binding site" evidence="1">
    <location>
        <position position="110"/>
    </location>
    <ligand>
        <name>sn-glycerol 3-phosphate</name>
        <dbReference type="ChEBI" id="CHEBI:57597"/>
    </ligand>
</feature>
<feature type="binding site" evidence="1">
    <location>
        <position position="139"/>
    </location>
    <ligand>
        <name>sn-glycerol 3-phosphate</name>
        <dbReference type="ChEBI" id="CHEBI:57597"/>
    </ligand>
</feature>
<feature type="binding site" evidence="1">
    <location>
        <position position="141"/>
    </location>
    <ligand>
        <name>sn-glycerol 3-phosphate</name>
        <dbReference type="ChEBI" id="CHEBI:57597"/>
    </ligand>
</feature>
<feature type="binding site" evidence="1">
    <location>
        <position position="143"/>
    </location>
    <ligand>
        <name>NADPH</name>
        <dbReference type="ChEBI" id="CHEBI:57783"/>
    </ligand>
</feature>
<feature type="binding site" evidence="1">
    <location>
        <position position="195"/>
    </location>
    <ligand>
        <name>sn-glycerol 3-phosphate</name>
        <dbReference type="ChEBI" id="CHEBI:57597"/>
    </ligand>
</feature>
<feature type="binding site" evidence="1">
    <location>
        <position position="248"/>
    </location>
    <ligand>
        <name>sn-glycerol 3-phosphate</name>
        <dbReference type="ChEBI" id="CHEBI:57597"/>
    </ligand>
</feature>
<feature type="binding site" evidence="1">
    <location>
        <position position="258"/>
    </location>
    <ligand>
        <name>sn-glycerol 3-phosphate</name>
        <dbReference type="ChEBI" id="CHEBI:57597"/>
    </ligand>
</feature>
<feature type="binding site" evidence="1">
    <location>
        <position position="259"/>
    </location>
    <ligand>
        <name>NADPH</name>
        <dbReference type="ChEBI" id="CHEBI:57783"/>
    </ligand>
</feature>
<feature type="binding site" evidence="1">
    <location>
        <position position="259"/>
    </location>
    <ligand>
        <name>sn-glycerol 3-phosphate</name>
        <dbReference type="ChEBI" id="CHEBI:57597"/>
    </ligand>
</feature>
<feature type="binding site" evidence="1">
    <location>
        <position position="260"/>
    </location>
    <ligand>
        <name>sn-glycerol 3-phosphate</name>
        <dbReference type="ChEBI" id="CHEBI:57597"/>
    </ligand>
</feature>
<feature type="binding site" evidence="1">
    <location>
        <position position="283"/>
    </location>
    <ligand>
        <name>NADPH</name>
        <dbReference type="ChEBI" id="CHEBI:57783"/>
    </ligand>
</feature>
<feature type="binding site" evidence="1">
    <location>
        <position position="285"/>
    </location>
    <ligand>
        <name>NADPH</name>
        <dbReference type="ChEBI" id="CHEBI:57783"/>
    </ligand>
</feature>
<gene>
    <name evidence="1" type="primary">gpsA</name>
    <name type="ordered locus">EcHS_A3820</name>
</gene>
<accession>A8A673</accession>